<name>YCF3_SACOF</name>
<gene>
    <name evidence="1" type="primary">ycf3</name>
</gene>
<protein>
    <recommendedName>
        <fullName evidence="1">Photosystem I assembly protein Ycf3</fullName>
    </recommendedName>
</protein>
<keyword id="KW-0150">Chloroplast</keyword>
<keyword id="KW-0472">Membrane</keyword>
<keyword id="KW-0602">Photosynthesis</keyword>
<keyword id="KW-0934">Plastid</keyword>
<keyword id="KW-0677">Repeat</keyword>
<keyword id="KW-0793">Thylakoid</keyword>
<keyword id="KW-0802">TPR repeat</keyword>
<accession>Q6ENW2</accession>
<sequence length="170" mass="19726">MPRSRINGNFIDKTSSIVANILLQIIPTTSGEKRAFTYYRDGMLAQSEGNYAEALQNYYEATRLEIDPYDRSYILYNIGLIHTSNGEHTKALEYYFRALERNPFLPQAFNNMAVICHYRGEQAILQGDSEIAEAWFDQAAEYWKQAIALTPGNYIEAQNWLKITKRFEFE</sequence>
<feature type="chain" id="PRO_0000217822" description="Photosystem I assembly protein Ycf3">
    <location>
        <begin position="1"/>
        <end position="170"/>
    </location>
</feature>
<feature type="repeat" description="TPR 1">
    <location>
        <begin position="35"/>
        <end position="68"/>
    </location>
</feature>
<feature type="repeat" description="TPR 2">
    <location>
        <begin position="72"/>
        <end position="105"/>
    </location>
</feature>
<feature type="repeat" description="TPR 3">
    <location>
        <begin position="120"/>
        <end position="153"/>
    </location>
</feature>
<dbReference type="EMBL" id="AP006714">
    <property type="protein sequence ID" value="BAD27294.1"/>
    <property type="molecule type" value="Genomic_DNA"/>
</dbReference>
<dbReference type="SMR" id="Q6ENW2"/>
<dbReference type="GO" id="GO:0009535">
    <property type="term" value="C:chloroplast thylakoid membrane"/>
    <property type="evidence" value="ECO:0007669"/>
    <property type="project" value="UniProtKB-SubCell"/>
</dbReference>
<dbReference type="GO" id="GO:0015979">
    <property type="term" value="P:photosynthesis"/>
    <property type="evidence" value="ECO:0007669"/>
    <property type="project" value="UniProtKB-UniRule"/>
</dbReference>
<dbReference type="FunFam" id="1.25.40.10:FF:000004">
    <property type="entry name" value="Photosystem I assembly protein Ycf3"/>
    <property type="match status" value="1"/>
</dbReference>
<dbReference type="Gene3D" id="1.25.40.10">
    <property type="entry name" value="Tetratricopeptide repeat domain"/>
    <property type="match status" value="1"/>
</dbReference>
<dbReference type="HAMAP" id="MF_00439">
    <property type="entry name" value="Ycf3"/>
    <property type="match status" value="1"/>
</dbReference>
<dbReference type="InterPro" id="IPR022818">
    <property type="entry name" value="PSI_Ycf3_assembly"/>
</dbReference>
<dbReference type="InterPro" id="IPR011990">
    <property type="entry name" value="TPR-like_helical_dom_sf"/>
</dbReference>
<dbReference type="InterPro" id="IPR019734">
    <property type="entry name" value="TPR_rpt"/>
</dbReference>
<dbReference type="InterPro" id="IPR051685">
    <property type="entry name" value="Ycf3/AcsC/BcsC/TPR_MFPF"/>
</dbReference>
<dbReference type="NCBIfam" id="NF002725">
    <property type="entry name" value="PRK02603.1"/>
    <property type="match status" value="1"/>
</dbReference>
<dbReference type="PANTHER" id="PTHR44943">
    <property type="entry name" value="CELLULOSE SYNTHASE OPERON PROTEIN C"/>
    <property type="match status" value="1"/>
</dbReference>
<dbReference type="PANTHER" id="PTHR44943:SF8">
    <property type="entry name" value="TPR REPEAT-CONTAINING PROTEIN MJ0263"/>
    <property type="match status" value="1"/>
</dbReference>
<dbReference type="Pfam" id="PF00515">
    <property type="entry name" value="TPR_1"/>
    <property type="match status" value="1"/>
</dbReference>
<dbReference type="SMART" id="SM00028">
    <property type="entry name" value="TPR"/>
    <property type="match status" value="3"/>
</dbReference>
<dbReference type="SUPFAM" id="SSF48452">
    <property type="entry name" value="TPR-like"/>
    <property type="match status" value="1"/>
</dbReference>
<dbReference type="PROSITE" id="PS50005">
    <property type="entry name" value="TPR"/>
    <property type="match status" value="3"/>
</dbReference>
<dbReference type="PROSITE" id="PS50293">
    <property type="entry name" value="TPR_REGION"/>
    <property type="match status" value="1"/>
</dbReference>
<reference key="1">
    <citation type="journal article" date="2004" name="DNA Res.">
        <title>Complete nucleotide sequence of the sugarcane (Saccharum officinarum) chloroplast genome: a comparative analysis of four monocot chloroplast genomes.</title>
        <authorList>
            <person name="Asano T."/>
            <person name="Tsudzuki T."/>
            <person name="Takahashi S."/>
            <person name="Shimada H."/>
            <person name="Kadowaki K."/>
        </authorList>
    </citation>
    <scope>NUCLEOTIDE SEQUENCE [LARGE SCALE GENOMIC DNA]</scope>
</reference>
<organism>
    <name type="scientific">Saccharum officinarum</name>
    <name type="common">Sugarcane</name>
    <dbReference type="NCBI Taxonomy" id="4547"/>
    <lineage>
        <taxon>Eukaryota</taxon>
        <taxon>Viridiplantae</taxon>
        <taxon>Streptophyta</taxon>
        <taxon>Embryophyta</taxon>
        <taxon>Tracheophyta</taxon>
        <taxon>Spermatophyta</taxon>
        <taxon>Magnoliopsida</taxon>
        <taxon>Liliopsida</taxon>
        <taxon>Poales</taxon>
        <taxon>Poaceae</taxon>
        <taxon>PACMAD clade</taxon>
        <taxon>Panicoideae</taxon>
        <taxon>Andropogonodae</taxon>
        <taxon>Andropogoneae</taxon>
        <taxon>Saccharinae</taxon>
        <taxon>Saccharum</taxon>
        <taxon>Saccharum officinarum species complex</taxon>
    </lineage>
</organism>
<comment type="function">
    <text evidence="1">Essential for the assembly of the photosystem I (PSI) complex. May act as a chaperone-like factor to guide the assembly of the PSI subunits.</text>
</comment>
<comment type="subcellular location">
    <subcellularLocation>
        <location evidence="1">Plastid</location>
        <location evidence="1">Chloroplast thylakoid membrane</location>
        <topology evidence="1">Peripheral membrane protein</topology>
    </subcellularLocation>
</comment>
<comment type="similarity">
    <text evidence="1">Belongs to the Ycf3 family.</text>
</comment>
<proteinExistence type="inferred from homology"/>
<geneLocation type="chloroplast"/>
<evidence type="ECO:0000255" key="1">
    <source>
        <dbReference type="HAMAP-Rule" id="MF_00439"/>
    </source>
</evidence>